<sequence>MFLAQEIIRKKRDGHALSDEEIRFFINGIRDNTISEGQIAALAMTIFFHDMTMPERVSLTMAMRDSGTVLDWKSLHLNGPIVDKHSTGGVGDVTSLMLGPMVAACGGYIPMISGRGLGHTGGTLDKLESIPGFDIFPDDNRFREIIKDVGVAIIGQTSSLAPADKRFYATRDITATVDSIPLITASILAKKLAEGLDALVMDVKVGSGAFMPTYELSEALAEAIVGVANGAGVRTTALLTDMNQVLASSAGNAVEVREAVQFLTGEYRNPRLFDVTMALCVEMLISGKLAKDDAEARAKLQAVLDNGKAAEVFGRMVAAQKGPTDFVENYAKYLPTAMLTKAVYADTEGFVSEMDTRALGMAVVAMGGGRRQASDTIDYSVGFTDMARLGDQVDGQRPLAVIHAKDENSWQEAAKAVKAAIKLADKAPESTPTVYRRISE</sequence>
<dbReference type="EC" id="2.4.2.4" evidence="1"/>
<dbReference type="EMBL" id="CP000970">
    <property type="protein sequence ID" value="ACB18750.1"/>
    <property type="molecule type" value="Genomic_DNA"/>
</dbReference>
<dbReference type="RefSeq" id="WP_000477811.1">
    <property type="nucleotide sequence ID" value="NC_010498.1"/>
</dbReference>
<dbReference type="SMR" id="B1LEI7"/>
<dbReference type="BindingDB" id="B1LEI7"/>
<dbReference type="GeneID" id="93777462"/>
<dbReference type="KEGG" id="ecm:EcSMS35_4931"/>
<dbReference type="HOGENOM" id="CLU_025040_0_1_6"/>
<dbReference type="UniPathway" id="UPA00578">
    <property type="reaction ID" value="UER00638"/>
</dbReference>
<dbReference type="Proteomes" id="UP000007011">
    <property type="component" value="Chromosome"/>
</dbReference>
<dbReference type="GO" id="GO:0005829">
    <property type="term" value="C:cytosol"/>
    <property type="evidence" value="ECO:0007669"/>
    <property type="project" value="TreeGrafter"/>
</dbReference>
<dbReference type="GO" id="GO:0004645">
    <property type="term" value="F:1,4-alpha-oligoglucan phosphorylase activity"/>
    <property type="evidence" value="ECO:0007669"/>
    <property type="project" value="InterPro"/>
</dbReference>
<dbReference type="GO" id="GO:0009032">
    <property type="term" value="F:thymidine phosphorylase activity"/>
    <property type="evidence" value="ECO:0007669"/>
    <property type="project" value="UniProtKB-UniRule"/>
</dbReference>
<dbReference type="GO" id="GO:0006206">
    <property type="term" value="P:pyrimidine nucleobase metabolic process"/>
    <property type="evidence" value="ECO:0007669"/>
    <property type="project" value="InterPro"/>
</dbReference>
<dbReference type="GO" id="GO:0046104">
    <property type="term" value="P:thymidine metabolic process"/>
    <property type="evidence" value="ECO:0007669"/>
    <property type="project" value="UniProtKB-UniRule"/>
</dbReference>
<dbReference type="FunFam" id="3.40.1030.10:FF:000001">
    <property type="entry name" value="Thymidine phosphorylase"/>
    <property type="match status" value="1"/>
</dbReference>
<dbReference type="FunFam" id="3.90.1170.30:FF:000001">
    <property type="entry name" value="Thymidine phosphorylase"/>
    <property type="match status" value="1"/>
</dbReference>
<dbReference type="Gene3D" id="3.40.1030.10">
    <property type="entry name" value="Nucleoside phosphorylase/phosphoribosyltransferase catalytic domain"/>
    <property type="match status" value="1"/>
</dbReference>
<dbReference type="Gene3D" id="3.90.1170.30">
    <property type="entry name" value="Pyrimidine nucleoside phosphorylase-like, C-terminal domain"/>
    <property type="match status" value="1"/>
</dbReference>
<dbReference type="Gene3D" id="1.20.970.10">
    <property type="entry name" value="Transferase, Pyrimidine Nucleoside Phosphorylase, Chain C"/>
    <property type="match status" value="1"/>
</dbReference>
<dbReference type="HAMAP" id="MF_01628">
    <property type="entry name" value="Thymid_phosp"/>
    <property type="match status" value="1"/>
</dbReference>
<dbReference type="InterPro" id="IPR000312">
    <property type="entry name" value="Glycosyl_Trfase_fam3"/>
</dbReference>
<dbReference type="InterPro" id="IPR017459">
    <property type="entry name" value="Glycosyl_Trfase_fam3_N_dom"/>
</dbReference>
<dbReference type="InterPro" id="IPR036320">
    <property type="entry name" value="Glycosyl_Trfase_fam3_N_dom_sf"/>
</dbReference>
<dbReference type="InterPro" id="IPR035902">
    <property type="entry name" value="Nuc_phospho_transferase"/>
</dbReference>
<dbReference type="InterPro" id="IPR036566">
    <property type="entry name" value="PYNP-like_C_sf"/>
</dbReference>
<dbReference type="InterPro" id="IPR013102">
    <property type="entry name" value="PYNP_C"/>
</dbReference>
<dbReference type="InterPro" id="IPR018090">
    <property type="entry name" value="Pyrmidine_PPas_bac/euk"/>
</dbReference>
<dbReference type="InterPro" id="IPR017872">
    <property type="entry name" value="Pyrmidine_PPase_CS"/>
</dbReference>
<dbReference type="InterPro" id="IPR000053">
    <property type="entry name" value="Thymidine/pyrmidine_PPase"/>
</dbReference>
<dbReference type="InterPro" id="IPR013465">
    <property type="entry name" value="Thymidine_Pase"/>
</dbReference>
<dbReference type="NCBIfam" id="NF004490">
    <property type="entry name" value="PRK05820.1"/>
    <property type="match status" value="1"/>
</dbReference>
<dbReference type="NCBIfam" id="TIGR02643">
    <property type="entry name" value="T_phosphoryl"/>
    <property type="match status" value="1"/>
</dbReference>
<dbReference type="NCBIfam" id="TIGR02644">
    <property type="entry name" value="Y_phosphoryl"/>
    <property type="match status" value="1"/>
</dbReference>
<dbReference type="PANTHER" id="PTHR10515">
    <property type="entry name" value="THYMIDINE PHOSPHORYLASE"/>
    <property type="match status" value="1"/>
</dbReference>
<dbReference type="PANTHER" id="PTHR10515:SF0">
    <property type="entry name" value="THYMIDINE PHOSPHORYLASE"/>
    <property type="match status" value="1"/>
</dbReference>
<dbReference type="Pfam" id="PF02885">
    <property type="entry name" value="Glycos_trans_3N"/>
    <property type="match status" value="1"/>
</dbReference>
<dbReference type="Pfam" id="PF00591">
    <property type="entry name" value="Glycos_transf_3"/>
    <property type="match status" value="1"/>
</dbReference>
<dbReference type="Pfam" id="PF07831">
    <property type="entry name" value="PYNP_C"/>
    <property type="match status" value="1"/>
</dbReference>
<dbReference type="PIRSF" id="PIRSF000478">
    <property type="entry name" value="TP_PyNP"/>
    <property type="match status" value="1"/>
</dbReference>
<dbReference type="SMART" id="SM00941">
    <property type="entry name" value="PYNP_C"/>
    <property type="match status" value="1"/>
</dbReference>
<dbReference type="SUPFAM" id="SSF52418">
    <property type="entry name" value="Nucleoside phosphorylase/phosphoribosyltransferase catalytic domain"/>
    <property type="match status" value="1"/>
</dbReference>
<dbReference type="SUPFAM" id="SSF47648">
    <property type="entry name" value="Nucleoside phosphorylase/phosphoribosyltransferase N-terminal domain"/>
    <property type="match status" value="1"/>
</dbReference>
<dbReference type="SUPFAM" id="SSF54680">
    <property type="entry name" value="Pyrimidine nucleoside phosphorylase C-terminal domain"/>
    <property type="match status" value="1"/>
</dbReference>
<dbReference type="PROSITE" id="PS00647">
    <property type="entry name" value="THYMID_PHOSPHORYLASE"/>
    <property type="match status" value="1"/>
</dbReference>
<accession>B1LEI7</accession>
<gene>
    <name evidence="1" type="primary">deoA</name>
    <name type="ordered locus">EcSMS35_4931</name>
</gene>
<reference key="1">
    <citation type="journal article" date="2008" name="J. Bacteriol.">
        <title>Insights into the environmental resistance gene pool from the genome sequence of the multidrug-resistant environmental isolate Escherichia coli SMS-3-5.</title>
        <authorList>
            <person name="Fricke W.F."/>
            <person name="Wright M.S."/>
            <person name="Lindell A.H."/>
            <person name="Harkins D.M."/>
            <person name="Baker-Austin C."/>
            <person name="Ravel J."/>
            <person name="Stepanauskas R."/>
        </authorList>
    </citation>
    <scope>NUCLEOTIDE SEQUENCE [LARGE SCALE GENOMIC DNA]</scope>
    <source>
        <strain>SMS-3-5 / SECEC</strain>
    </source>
</reference>
<evidence type="ECO:0000255" key="1">
    <source>
        <dbReference type="HAMAP-Rule" id="MF_01628"/>
    </source>
</evidence>
<comment type="function">
    <text evidence="1">The enzymes which catalyze the reversible phosphorolysis of pyrimidine nucleosides are involved in the degradation of these compounds and in their utilization as carbon and energy sources, or in the rescue of pyrimidine bases for nucleotide synthesis.</text>
</comment>
<comment type="catalytic activity">
    <reaction evidence="1">
        <text>thymidine + phosphate = 2-deoxy-alpha-D-ribose 1-phosphate + thymine</text>
        <dbReference type="Rhea" id="RHEA:16037"/>
        <dbReference type="ChEBI" id="CHEBI:17748"/>
        <dbReference type="ChEBI" id="CHEBI:17821"/>
        <dbReference type="ChEBI" id="CHEBI:43474"/>
        <dbReference type="ChEBI" id="CHEBI:57259"/>
        <dbReference type="EC" id="2.4.2.4"/>
    </reaction>
</comment>
<comment type="pathway">
    <text evidence="1">Pyrimidine metabolism; dTMP biosynthesis via salvage pathway; dTMP from thymine: step 1/2.</text>
</comment>
<comment type="subunit">
    <text evidence="1">Homodimer.</text>
</comment>
<comment type="similarity">
    <text evidence="1">Belongs to the thymidine/pyrimidine-nucleoside phosphorylase family.</text>
</comment>
<organism>
    <name type="scientific">Escherichia coli (strain SMS-3-5 / SECEC)</name>
    <dbReference type="NCBI Taxonomy" id="439855"/>
    <lineage>
        <taxon>Bacteria</taxon>
        <taxon>Pseudomonadati</taxon>
        <taxon>Pseudomonadota</taxon>
        <taxon>Gammaproteobacteria</taxon>
        <taxon>Enterobacterales</taxon>
        <taxon>Enterobacteriaceae</taxon>
        <taxon>Escherichia</taxon>
    </lineage>
</organism>
<proteinExistence type="inferred from homology"/>
<protein>
    <recommendedName>
        <fullName evidence="1">Thymidine phosphorylase</fullName>
        <ecNumber evidence="1">2.4.2.4</ecNumber>
    </recommendedName>
    <alternativeName>
        <fullName evidence="1">TdRPase</fullName>
    </alternativeName>
</protein>
<name>TYPH_ECOSM</name>
<keyword id="KW-0328">Glycosyltransferase</keyword>
<keyword id="KW-0808">Transferase</keyword>
<feature type="chain" id="PRO_1000186259" description="Thymidine phosphorylase">
    <location>
        <begin position="1"/>
        <end position="440"/>
    </location>
</feature>